<keyword id="KW-0238">DNA-binding</keyword>
<keyword id="KW-0479">Metal-binding</keyword>
<keyword id="KW-0533">Nickel</keyword>
<keyword id="KW-0804">Transcription</keyword>
<keyword id="KW-0805">Transcription regulation</keyword>
<sequence>MSAEKISISLPKELYRELEDFITRKGIPDRSKIFQIALRNYLDENREGTEIIYGIINLVYDHEEASEALTEIQHEYKDNIISTLHLHVNERLCIEAIAVKGEKSKLVELNNRLGQIRGILKARLLISFPYEKT</sequence>
<reference key="1">
    <citation type="journal article" date="2009" name="Proc. Natl. Acad. Sci. U.S.A.">
        <title>Biogeography of the Sulfolobus islandicus pan-genome.</title>
        <authorList>
            <person name="Reno M.L."/>
            <person name="Held N.L."/>
            <person name="Fields C.J."/>
            <person name="Burke P.V."/>
            <person name="Whitaker R.J."/>
        </authorList>
    </citation>
    <scope>NUCLEOTIDE SEQUENCE [LARGE SCALE GENOMIC DNA]</scope>
    <source>
        <strain>M.16.27</strain>
    </source>
</reference>
<protein>
    <recommendedName>
        <fullName evidence="1">Putative nickel-responsive regulator</fullName>
    </recommendedName>
</protein>
<feature type="chain" id="PRO_1000206381" description="Putative nickel-responsive regulator">
    <location>
        <begin position="1"/>
        <end position="133"/>
    </location>
</feature>
<feature type="binding site" evidence="1">
    <location>
        <position position="74"/>
    </location>
    <ligand>
        <name>Ni(2+)</name>
        <dbReference type="ChEBI" id="CHEBI:49786"/>
    </ligand>
</feature>
<feature type="binding site" evidence="1">
    <location>
        <position position="85"/>
    </location>
    <ligand>
        <name>Ni(2+)</name>
        <dbReference type="ChEBI" id="CHEBI:49786"/>
    </ligand>
</feature>
<feature type="binding site" evidence="1">
    <location>
        <position position="87"/>
    </location>
    <ligand>
        <name>Ni(2+)</name>
        <dbReference type="ChEBI" id="CHEBI:49786"/>
    </ligand>
</feature>
<feature type="binding site" evidence="1">
    <location>
        <position position="93"/>
    </location>
    <ligand>
        <name>Ni(2+)</name>
        <dbReference type="ChEBI" id="CHEBI:49786"/>
    </ligand>
</feature>
<comment type="function">
    <text evidence="1">Transcriptional regulator.</text>
</comment>
<comment type="cofactor">
    <cofactor evidence="1">
        <name>Ni(2+)</name>
        <dbReference type="ChEBI" id="CHEBI:49786"/>
    </cofactor>
    <text evidence="1">Binds 1 nickel ion per subunit.</text>
</comment>
<comment type="similarity">
    <text evidence="1">Belongs to the transcriptional regulatory CopG/NikR family.</text>
</comment>
<evidence type="ECO:0000255" key="1">
    <source>
        <dbReference type="HAMAP-Rule" id="MF_00476"/>
    </source>
</evidence>
<gene>
    <name type="ordered locus">M1627_1592</name>
</gene>
<accession>C3N649</accession>
<name>NIKR_SACI3</name>
<dbReference type="EMBL" id="CP001401">
    <property type="protein sequence ID" value="ACP55474.1"/>
    <property type="molecule type" value="Genomic_DNA"/>
</dbReference>
<dbReference type="RefSeq" id="WP_012711473.1">
    <property type="nucleotide sequence ID" value="NC_012632.1"/>
</dbReference>
<dbReference type="SMR" id="C3N649"/>
<dbReference type="KEGG" id="sim:M1627_1592"/>
<dbReference type="HOGENOM" id="CLU_113319_2_1_2"/>
<dbReference type="Proteomes" id="UP000002307">
    <property type="component" value="Chromosome"/>
</dbReference>
<dbReference type="GO" id="GO:0003677">
    <property type="term" value="F:DNA binding"/>
    <property type="evidence" value="ECO:0007669"/>
    <property type="project" value="UniProtKB-KW"/>
</dbReference>
<dbReference type="GO" id="GO:0003700">
    <property type="term" value="F:DNA-binding transcription factor activity"/>
    <property type="evidence" value="ECO:0007669"/>
    <property type="project" value="UniProtKB-UniRule"/>
</dbReference>
<dbReference type="GO" id="GO:0016151">
    <property type="term" value="F:nickel cation binding"/>
    <property type="evidence" value="ECO:0007669"/>
    <property type="project" value="UniProtKB-UniRule"/>
</dbReference>
<dbReference type="GO" id="GO:0010045">
    <property type="term" value="P:response to nickel cation"/>
    <property type="evidence" value="ECO:0007669"/>
    <property type="project" value="InterPro"/>
</dbReference>
<dbReference type="CDD" id="cd22231">
    <property type="entry name" value="RHH_NikR_HicB-like"/>
    <property type="match status" value="1"/>
</dbReference>
<dbReference type="Gene3D" id="3.30.70.1150">
    <property type="entry name" value="ACT-like. Chain A, domain 2"/>
    <property type="match status" value="1"/>
</dbReference>
<dbReference type="Gene3D" id="1.10.1220.10">
    <property type="entry name" value="Met repressor-like"/>
    <property type="match status" value="1"/>
</dbReference>
<dbReference type="HAMAP" id="MF_00476">
    <property type="entry name" value="NikR"/>
    <property type="match status" value="1"/>
</dbReference>
<dbReference type="InterPro" id="IPR027271">
    <property type="entry name" value="Acetolactate_synth/TF_NikR_C"/>
</dbReference>
<dbReference type="InterPro" id="IPR045865">
    <property type="entry name" value="ACT-like_dom_sf"/>
</dbReference>
<dbReference type="InterPro" id="IPR013321">
    <property type="entry name" value="Arc_rbn_hlx_hlx"/>
</dbReference>
<dbReference type="InterPro" id="IPR002145">
    <property type="entry name" value="CopG"/>
</dbReference>
<dbReference type="InterPro" id="IPR050192">
    <property type="entry name" value="CopG/NikR_regulator"/>
</dbReference>
<dbReference type="InterPro" id="IPR022988">
    <property type="entry name" value="Ni_resp_reg_NikR"/>
</dbReference>
<dbReference type="InterPro" id="IPR010985">
    <property type="entry name" value="Ribbon_hlx_hlx"/>
</dbReference>
<dbReference type="InterPro" id="IPR014864">
    <property type="entry name" value="TF_NikR_Ni-bd_C"/>
</dbReference>
<dbReference type="PANTHER" id="PTHR34719">
    <property type="entry name" value="NICKEL-RESPONSIVE REGULATOR"/>
    <property type="match status" value="1"/>
</dbReference>
<dbReference type="PANTHER" id="PTHR34719:SF2">
    <property type="entry name" value="NICKEL-RESPONSIVE REGULATOR"/>
    <property type="match status" value="1"/>
</dbReference>
<dbReference type="Pfam" id="PF08753">
    <property type="entry name" value="NikR_C"/>
    <property type="match status" value="1"/>
</dbReference>
<dbReference type="Pfam" id="PF01402">
    <property type="entry name" value="RHH_1"/>
    <property type="match status" value="1"/>
</dbReference>
<dbReference type="SUPFAM" id="SSF55021">
    <property type="entry name" value="ACT-like"/>
    <property type="match status" value="1"/>
</dbReference>
<dbReference type="SUPFAM" id="SSF47598">
    <property type="entry name" value="Ribbon-helix-helix"/>
    <property type="match status" value="1"/>
</dbReference>
<organism>
    <name type="scientific">Saccharolobus islandicus (strain M.16.27)</name>
    <name type="common">Sulfolobus islandicus</name>
    <dbReference type="NCBI Taxonomy" id="427318"/>
    <lineage>
        <taxon>Archaea</taxon>
        <taxon>Thermoproteota</taxon>
        <taxon>Thermoprotei</taxon>
        <taxon>Sulfolobales</taxon>
        <taxon>Sulfolobaceae</taxon>
        <taxon>Saccharolobus</taxon>
    </lineage>
</organism>
<proteinExistence type="inferred from homology"/>